<comment type="function">
    <text evidence="1">Mannosyltransferase involved in glycosylphosphatidylinositol-anchor biosynthesis. Transfers the second mannose to the glycosylphosphatidylinositol during GPI precursor assembly (By similarity).</text>
</comment>
<comment type="pathway">
    <text>Glycolipid biosynthesis; glycosylphosphatidylinositol-anchor biosynthesis.</text>
</comment>
<comment type="subcellular location">
    <subcellularLocation>
        <location evidence="1">Endoplasmic reticulum membrane</location>
        <topology evidence="1">Multi-pass membrane protein</topology>
    </subcellularLocation>
</comment>
<comment type="similarity">
    <text evidence="3">Belongs to the PIGV family.</text>
</comment>
<dbReference type="EC" id="2.4.1.-"/>
<dbReference type="EMBL" id="CR382125">
    <property type="protein sequence ID" value="CAG99810.1"/>
    <property type="molecule type" value="Genomic_DNA"/>
</dbReference>
<dbReference type="RefSeq" id="XP_454723.1">
    <property type="nucleotide sequence ID" value="XM_454723.1"/>
</dbReference>
<dbReference type="FunCoup" id="Q6CMW6">
    <property type="interactions" value="313"/>
</dbReference>
<dbReference type="STRING" id="284590.Q6CMW6"/>
<dbReference type="CAZy" id="GT76">
    <property type="family name" value="Glycosyltransferase Family 76"/>
</dbReference>
<dbReference type="PaxDb" id="284590-Q6CMW6"/>
<dbReference type="KEGG" id="kla:KLLA0_E17161g"/>
<dbReference type="eggNOG" id="KOG2647">
    <property type="taxonomic scope" value="Eukaryota"/>
</dbReference>
<dbReference type="HOGENOM" id="CLU_029048_0_0_1"/>
<dbReference type="InParanoid" id="Q6CMW6"/>
<dbReference type="OMA" id="WITCHAI"/>
<dbReference type="UniPathway" id="UPA00196"/>
<dbReference type="Proteomes" id="UP000000598">
    <property type="component" value="Chromosome E"/>
</dbReference>
<dbReference type="GO" id="GO:0005789">
    <property type="term" value="C:endoplasmic reticulum membrane"/>
    <property type="evidence" value="ECO:0007669"/>
    <property type="project" value="UniProtKB-SubCell"/>
</dbReference>
<dbReference type="GO" id="GO:0031501">
    <property type="term" value="C:mannosyltransferase complex"/>
    <property type="evidence" value="ECO:0007669"/>
    <property type="project" value="TreeGrafter"/>
</dbReference>
<dbReference type="GO" id="GO:0000009">
    <property type="term" value="F:alpha-1,6-mannosyltransferase activity"/>
    <property type="evidence" value="ECO:0007669"/>
    <property type="project" value="InterPro"/>
</dbReference>
<dbReference type="GO" id="GO:0004376">
    <property type="term" value="F:glycolipid mannosyltransferase activity"/>
    <property type="evidence" value="ECO:0007669"/>
    <property type="project" value="InterPro"/>
</dbReference>
<dbReference type="GO" id="GO:0006506">
    <property type="term" value="P:GPI anchor biosynthetic process"/>
    <property type="evidence" value="ECO:0007669"/>
    <property type="project" value="UniProtKB-UniPathway"/>
</dbReference>
<dbReference type="InterPro" id="IPR007315">
    <property type="entry name" value="PIG-V/Gpi18"/>
</dbReference>
<dbReference type="PANTHER" id="PTHR12468">
    <property type="entry name" value="GPI MANNOSYLTRANSFERASE 2"/>
    <property type="match status" value="1"/>
</dbReference>
<dbReference type="PANTHER" id="PTHR12468:SF2">
    <property type="entry name" value="GPI MANNOSYLTRANSFERASE 2"/>
    <property type="match status" value="1"/>
</dbReference>
<dbReference type="Pfam" id="PF04188">
    <property type="entry name" value="Mannosyl_trans2"/>
    <property type="match status" value="1"/>
</dbReference>
<sequence>MFIDSEYSSFLIINVTFFAVKLLQFGLVWLAPRTFDTSTHLFLEHYGITSNPWWGKLLSWDSIFFLKTSLWMRNSGYSAPQYEHEWAFSPIWSIIIQSSDLQHIVLKAVSFNLLLHYLSTWIVYALTKLTFPPFGQNVQTKLALTTSVLFILSSAAGFLISVYSEPIAFTFSLLGMLFRQWSISFDVYGNLHMDKLKWISYLLSSFCFAFAFLNRSNCLLLGLFYVHDCLNLFKQKKWITSIFYPILSGTILFGVFVYFHYYFPYAALCPERGEWCNSKIYGLPIPYQSLYSYIQSKHWNVGFLKYWTPNNIPNFLFGLPNIVITWNAITYFSYQYPSRNMKPYIWIARIFLFIMVFLANVQIINRVSSFLPLSLWYISDSLIKNPHEMRIVKYYVMWLLIWIPTQTALFACFLPPA</sequence>
<feature type="chain" id="PRO_0000246248" description="GPI mannosyltransferase 2">
    <location>
        <begin position="1"/>
        <end position="417"/>
    </location>
</feature>
<feature type="transmembrane region" description="Helical" evidence="2">
    <location>
        <begin position="10"/>
        <end position="30"/>
    </location>
</feature>
<feature type="transmembrane region" description="Helical" evidence="2">
    <location>
        <begin position="104"/>
        <end position="124"/>
    </location>
</feature>
<feature type="transmembrane region" description="Helical" evidence="2">
    <location>
        <begin position="142"/>
        <end position="162"/>
    </location>
</feature>
<feature type="transmembrane region" description="Helical" evidence="2">
    <location>
        <begin position="167"/>
        <end position="187"/>
    </location>
</feature>
<feature type="transmembrane region" description="Helical" evidence="2">
    <location>
        <begin position="206"/>
        <end position="226"/>
    </location>
</feature>
<feature type="transmembrane region" description="Helical" evidence="2">
    <location>
        <begin position="239"/>
        <end position="259"/>
    </location>
</feature>
<feature type="transmembrane region" description="Helical" evidence="2">
    <location>
        <begin position="312"/>
        <end position="332"/>
    </location>
</feature>
<feature type="transmembrane region" description="Helical" evidence="2">
    <location>
        <begin position="344"/>
        <end position="364"/>
    </location>
</feature>
<feature type="transmembrane region" description="Helical" evidence="2">
    <location>
        <begin position="394"/>
        <end position="414"/>
    </location>
</feature>
<accession>Q6CMW6</accession>
<name>GPI18_KLULA</name>
<protein>
    <recommendedName>
        <fullName>GPI mannosyltransferase 2</fullName>
        <ecNumber>2.4.1.-</ecNumber>
    </recommendedName>
    <alternativeName>
        <fullName>GPI mannosyltransferase II</fullName>
        <shortName>GPI-MT-II</shortName>
    </alternativeName>
    <alternativeName>
        <fullName>Glycosylphosphatidylinositol-anchor biosynthesis protein 18</fullName>
    </alternativeName>
</protein>
<reference key="1">
    <citation type="journal article" date="2004" name="Nature">
        <title>Genome evolution in yeasts.</title>
        <authorList>
            <person name="Dujon B."/>
            <person name="Sherman D."/>
            <person name="Fischer G."/>
            <person name="Durrens P."/>
            <person name="Casaregola S."/>
            <person name="Lafontaine I."/>
            <person name="de Montigny J."/>
            <person name="Marck C."/>
            <person name="Neuveglise C."/>
            <person name="Talla E."/>
            <person name="Goffard N."/>
            <person name="Frangeul L."/>
            <person name="Aigle M."/>
            <person name="Anthouard V."/>
            <person name="Babour A."/>
            <person name="Barbe V."/>
            <person name="Barnay S."/>
            <person name="Blanchin S."/>
            <person name="Beckerich J.-M."/>
            <person name="Beyne E."/>
            <person name="Bleykasten C."/>
            <person name="Boisrame A."/>
            <person name="Boyer J."/>
            <person name="Cattolico L."/>
            <person name="Confanioleri F."/>
            <person name="de Daruvar A."/>
            <person name="Despons L."/>
            <person name="Fabre E."/>
            <person name="Fairhead C."/>
            <person name="Ferry-Dumazet H."/>
            <person name="Groppi A."/>
            <person name="Hantraye F."/>
            <person name="Hennequin C."/>
            <person name="Jauniaux N."/>
            <person name="Joyet P."/>
            <person name="Kachouri R."/>
            <person name="Kerrest A."/>
            <person name="Koszul R."/>
            <person name="Lemaire M."/>
            <person name="Lesur I."/>
            <person name="Ma L."/>
            <person name="Muller H."/>
            <person name="Nicaud J.-M."/>
            <person name="Nikolski M."/>
            <person name="Oztas S."/>
            <person name="Ozier-Kalogeropoulos O."/>
            <person name="Pellenz S."/>
            <person name="Potier S."/>
            <person name="Richard G.-F."/>
            <person name="Straub M.-L."/>
            <person name="Suleau A."/>
            <person name="Swennen D."/>
            <person name="Tekaia F."/>
            <person name="Wesolowski-Louvel M."/>
            <person name="Westhof E."/>
            <person name="Wirth B."/>
            <person name="Zeniou-Meyer M."/>
            <person name="Zivanovic Y."/>
            <person name="Bolotin-Fukuhara M."/>
            <person name="Thierry A."/>
            <person name="Bouchier C."/>
            <person name="Caudron B."/>
            <person name="Scarpelli C."/>
            <person name="Gaillardin C."/>
            <person name="Weissenbach J."/>
            <person name="Wincker P."/>
            <person name="Souciet J.-L."/>
        </authorList>
    </citation>
    <scope>NUCLEOTIDE SEQUENCE [LARGE SCALE GENOMIC DNA]</scope>
    <source>
        <strain>ATCC 8585 / CBS 2359 / DSM 70799 / NBRC 1267 / NRRL Y-1140 / WM37</strain>
    </source>
</reference>
<evidence type="ECO:0000250" key="1"/>
<evidence type="ECO:0000255" key="2"/>
<evidence type="ECO:0000305" key="3"/>
<organism>
    <name type="scientific">Kluyveromyces lactis (strain ATCC 8585 / CBS 2359 / DSM 70799 / NBRC 1267 / NRRL Y-1140 / WM37)</name>
    <name type="common">Yeast</name>
    <name type="synonym">Candida sphaerica</name>
    <dbReference type="NCBI Taxonomy" id="284590"/>
    <lineage>
        <taxon>Eukaryota</taxon>
        <taxon>Fungi</taxon>
        <taxon>Dikarya</taxon>
        <taxon>Ascomycota</taxon>
        <taxon>Saccharomycotina</taxon>
        <taxon>Saccharomycetes</taxon>
        <taxon>Saccharomycetales</taxon>
        <taxon>Saccharomycetaceae</taxon>
        <taxon>Kluyveromyces</taxon>
    </lineage>
</organism>
<gene>
    <name type="primary">GPI18</name>
    <name type="ordered locus">KLLA0E17215g</name>
</gene>
<keyword id="KW-0256">Endoplasmic reticulum</keyword>
<keyword id="KW-0328">Glycosyltransferase</keyword>
<keyword id="KW-0337">GPI-anchor biosynthesis</keyword>
<keyword id="KW-0472">Membrane</keyword>
<keyword id="KW-1185">Reference proteome</keyword>
<keyword id="KW-0808">Transferase</keyword>
<keyword id="KW-0812">Transmembrane</keyword>
<keyword id="KW-1133">Transmembrane helix</keyword>
<proteinExistence type="inferred from homology"/>